<feature type="chain" id="PRO_0000131455" description="Small ribosomal subunit protein uS5">
    <location>
        <begin position="1"/>
        <end position="165"/>
    </location>
</feature>
<feature type="domain" description="S5 DRBM" evidence="1">
    <location>
        <begin position="10"/>
        <end position="73"/>
    </location>
</feature>
<sequence length="165" mass="17140">MAKVEQNEGLVEKLVAVDRVAKVVKGGRIFSFTALTVVGDGNGRVGFGRGKAREVPAAISKALEAARRNMITVDLAGTTLQHPVNARHGASRVYMQPASEGTGVIAGGAMRAVLEAAGVHNVLAKCYGSTNAANVVNATFKGLRDMTSPEKVAAKRGLSVEQIQG</sequence>
<keyword id="KW-0687">Ribonucleoprotein</keyword>
<keyword id="KW-0689">Ribosomal protein</keyword>
<keyword id="KW-0694">RNA-binding</keyword>
<keyword id="KW-0699">rRNA-binding</keyword>
<proteinExistence type="inferred from homology"/>
<dbReference type="EMBL" id="CR543861">
    <property type="protein sequence ID" value="CAG69886.1"/>
    <property type="molecule type" value="Genomic_DNA"/>
</dbReference>
<dbReference type="RefSeq" id="WP_004657688.1">
    <property type="nucleotide sequence ID" value="NC_005966.1"/>
</dbReference>
<dbReference type="SMR" id="Q6F7S9"/>
<dbReference type="STRING" id="202950.GCA_001485005_02953"/>
<dbReference type="GeneID" id="92834399"/>
<dbReference type="KEGG" id="aci:ACIAD3202"/>
<dbReference type="eggNOG" id="COG0098">
    <property type="taxonomic scope" value="Bacteria"/>
</dbReference>
<dbReference type="HOGENOM" id="CLU_065898_2_2_6"/>
<dbReference type="OrthoDB" id="9809045at2"/>
<dbReference type="BioCyc" id="ASP62977:ACIAD_RS14510-MONOMER"/>
<dbReference type="Proteomes" id="UP000000430">
    <property type="component" value="Chromosome"/>
</dbReference>
<dbReference type="GO" id="GO:0015935">
    <property type="term" value="C:small ribosomal subunit"/>
    <property type="evidence" value="ECO:0007669"/>
    <property type="project" value="InterPro"/>
</dbReference>
<dbReference type="GO" id="GO:0019843">
    <property type="term" value="F:rRNA binding"/>
    <property type="evidence" value="ECO:0007669"/>
    <property type="project" value="UniProtKB-UniRule"/>
</dbReference>
<dbReference type="GO" id="GO:0003735">
    <property type="term" value="F:structural constituent of ribosome"/>
    <property type="evidence" value="ECO:0007669"/>
    <property type="project" value="InterPro"/>
</dbReference>
<dbReference type="GO" id="GO:0006412">
    <property type="term" value="P:translation"/>
    <property type="evidence" value="ECO:0007669"/>
    <property type="project" value="UniProtKB-UniRule"/>
</dbReference>
<dbReference type="FunFam" id="3.30.160.20:FF:000001">
    <property type="entry name" value="30S ribosomal protein S5"/>
    <property type="match status" value="1"/>
</dbReference>
<dbReference type="FunFam" id="3.30.230.10:FF:000002">
    <property type="entry name" value="30S ribosomal protein S5"/>
    <property type="match status" value="1"/>
</dbReference>
<dbReference type="Gene3D" id="3.30.160.20">
    <property type="match status" value="1"/>
</dbReference>
<dbReference type="Gene3D" id="3.30.230.10">
    <property type="match status" value="1"/>
</dbReference>
<dbReference type="HAMAP" id="MF_01307_B">
    <property type="entry name" value="Ribosomal_uS5_B"/>
    <property type="match status" value="1"/>
</dbReference>
<dbReference type="InterPro" id="IPR020568">
    <property type="entry name" value="Ribosomal_Su5_D2-typ_SF"/>
</dbReference>
<dbReference type="InterPro" id="IPR000851">
    <property type="entry name" value="Ribosomal_uS5"/>
</dbReference>
<dbReference type="InterPro" id="IPR005712">
    <property type="entry name" value="Ribosomal_uS5_bac-type"/>
</dbReference>
<dbReference type="InterPro" id="IPR005324">
    <property type="entry name" value="Ribosomal_uS5_C"/>
</dbReference>
<dbReference type="InterPro" id="IPR013810">
    <property type="entry name" value="Ribosomal_uS5_N"/>
</dbReference>
<dbReference type="InterPro" id="IPR018192">
    <property type="entry name" value="Ribosomal_uS5_N_CS"/>
</dbReference>
<dbReference type="InterPro" id="IPR014721">
    <property type="entry name" value="Ribsml_uS5_D2-typ_fold_subgr"/>
</dbReference>
<dbReference type="NCBIfam" id="TIGR01021">
    <property type="entry name" value="rpsE_bact"/>
    <property type="match status" value="1"/>
</dbReference>
<dbReference type="PANTHER" id="PTHR48277">
    <property type="entry name" value="MITOCHONDRIAL RIBOSOMAL PROTEIN S5"/>
    <property type="match status" value="1"/>
</dbReference>
<dbReference type="PANTHER" id="PTHR48277:SF1">
    <property type="entry name" value="MITOCHONDRIAL RIBOSOMAL PROTEIN S5"/>
    <property type="match status" value="1"/>
</dbReference>
<dbReference type="Pfam" id="PF00333">
    <property type="entry name" value="Ribosomal_S5"/>
    <property type="match status" value="1"/>
</dbReference>
<dbReference type="Pfam" id="PF03719">
    <property type="entry name" value="Ribosomal_S5_C"/>
    <property type="match status" value="1"/>
</dbReference>
<dbReference type="SUPFAM" id="SSF54768">
    <property type="entry name" value="dsRNA-binding domain-like"/>
    <property type="match status" value="1"/>
</dbReference>
<dbReference type="SUPFAM" id="SSF54211">
    <property type="entry name" value="Ribosomal protein S5 domain 2-like"/>
    <property type="match status" value="1"/>
</dbReference>
<dbReference type="PROSITE" id="PS00585">
    <property type="entry name" value="RIBOSOMAL_S5"/>
    <property type="match status" value="1"/>
</dbReference>
<dbReference type="PROSITE" id="PS50881">
    <property type="entry name" value="S5_DSRBD"/>
    <property type="match status" value="1"/>
</dbReference>
<reference key="1">
    <citation type="journal article" date="2004" name="Nucleic Acids Res.">
        <title>Unique features revealed by the genome sequence of Acinetobacter sp. ADP1, a versatile and naturally transformation competent bacterium.</title>
        <authorList>
            <person name="Barbe V."/>
            <person name="Vallenet D."/>
            <person name="Fonknechten N."/>
            <person name="Kreimeyer A."/>
            <person name="Oztas S."/>
            <person name="Labarre L."/>
            <person name="Cruveiller S."/>
            <person name="Robert C."/>
            <person name="Duprat S."/>
            <person name="Wincker P."/>
            <person name="Ornston L.N."/>
            <person name="Weissenbach J."/>
            <person name="Marliere P."/>
            <person name="Cohen G.N."/>
            <person name="Medigue C."/>
        </authorList>
    </citation>
    <scope>NUCLEOTIDE SEQUENCE [LARGE SCALE GENOMIC DNA]</scope>
    <source>
        <strain>ATCC 33305 / BD413 / ADP1</strain>
    </source>
</reference>
<comment type="function">
    <text evidence="1">With S4 and S12 plays an important role in translational accuracy.</text>
</comment>
<comment type="function">
    <text evidence="1">Located at the back of the 30S subunit body where it stabilizes the conformation of the head with respect to the body.</text>
</comment>
<comment type="subunit">
    <text evidence="1">Part of the 30S ribosomal subunit. Contacts proteins S4 and S8.</text>
</comment>
<comment type="domain">
    <text>The N-terminal domain interacts with the head of the 30S subunit; the C-terminal domain interacts with the body and contacts protein S4. The interaction surface between S4 and S5 is involved in control of translational fidelity.</text>
</comment>
<comment type="similarity">
    <text evidence="1">Belongs to the universal ribosomal protein uS5 family.</text>
</comment>
<name>RS5_ACIAD</name>
<organism>
    <name type="scientific">Acinetobacter baylyi (strain ATCC 33305 / BD413 / ADP1)</name>
    <dbReference type="NCBI Taxonomy" id="62977"/>
    <lineage>
        <taxon>Bacteria</taxon>
        <taxon>Pseudomonadati</taxon>
        <taxon>Pseudomonadota</taxon>
        <taxon>Gammaproteobacteria</taxon>
        <taxon>Moraxellales</taxon>
        <taxon>Moraxellaceae</taxon>
        <taxon>Acinetobacter</taxon>
    </lineage>
</organism>
<accession>Q6F7S9</accession>
<protein>
    <recommendedName>
        <fullName evidence="1">Small ribosomal subunit protein uS5</fullName>
    </recommendedName>
    <alternativeName>
        <fullName evidence="2">30S ribosomal protein S5</fullName>
    </alternativeName>
</protein>
<evidence type="ECO:0000255" key="1">
    <source>
        <dbReference type="HAMAP-Rule" id="MF_01307"/>
    </source>
</evidence>
<evidence type="ECO:0000305" key="2"/>
<gene>
    <name evidence="1" type="primary">rpsE</name>
    <name type="ordered locus">ACIAD3202</name>
</gene>